<reference key="1">
    <citation type="journal article" date="2007" name="PLoS Genet.">
        <title>Genome analysis of Minibacterium massiliensis highlights the convergent evolution of water-living bacteria.</title>
        <authorList>
            <person name="Audic S."/>
            <person name="Robert C."/>
            <person name="Campagna B."/>
            <person name="Parinello H."/>
            <person name="Claverie J.-M."/>
            <person name="Raoult D."/>
            <person name="Drancourt M."/>
        </authorList>
    </citation>
    <scope>NUCLEOTIDE SEQUENCE [LARGE SCALE GENOMIC DNA]</scope>
    <source>
        <strain>Marseille</strain>
    </source>
</reference>
<evidence type="ECO:0000255" key="1">
    <source>
        <dbReference type="HAMAP-Rule" id="MF_01629"/>
    </source>
</evidence>
<proteinExistence type="inferred from homology"/>
<protein>
    <recommendedName>
        <fullName evidence="1">Pyridoxine/pyridoxamine 5'-phosphate oxidase</fullName>
        <ecNumber evidence="1">1.4.3.5</ecNumber>
    </recommendedName>
    <alternativeName>
        <fullName evidence="1">PNP/PMP oxidase</fullName>
        <shortName evidence="1">PNPOx</shortName>
    </alternativeName>
    <alternativeName>
        <fullName evidence="1">Pyridoxal 5'-phosphate synthase</fullName>
    </alternativeName>
</protein>
<accession>A6T1X9</accession>
<feature type="chain" id="PRO_0000335787" description="Pyridoxine/pyridoxamine 5'-phosphate oxidase">
    <location>
        <begin position="1"/>
        <end position="211"/>
    </location>
</feature>
<feature type="binding site" evidence="1">
    <location>
        <begin position="7"/>
        <end position="10"/>
    </location>
    <ligand>
        <name>substrate</name>
    </ligand>
</feature>
<feature type="binding site" evidence="1">
    <location>
        <begin position="60"/>
        <end position="65"/>
    </location>
    <ligand>
        <name>FMN</name>
        <dbReference type="ChEBI" id="CHEBI:58210"/>
    </ligand>
</feature>
<feature type="binding site" evidence="1">
    <location>
        <position position="65"/>
    </location>
    <ligand>
        <name>substrate</name>
    </ligand>
</feature>
<feature type="binding site" evidence="1">
    <location>
        <begin position="75"/>
        <end position="76"/>
    </location>
    <ligand>
        <name>FMN</name>
        <dbReference type="ChEBI" id="CHEBI:58210"/>
    </ligand>
</feature>
<feature type="binding site" evidence="1">
    <location>
        <position position="81"/>
    </location>
    <ligand>
        <name>FMN</name>
        <dbReference type="ChEBI" id="CHEBI:58210"/>
    </ligand>
</feature>
<feature type="binding site" evidence="1">
    <location>
        <position position="82"/>
    </location>
    <ligand>
        <name>FMN</name>
        <dbReference type="ChEBI" id="CHEBI:58210"/>
    </ligand>
</feature>
<feature type="binding site" evidence="1">
    <location>
        <position position="122"/>
    </location>
    <ligand>
        <name>substrate</name>
    </ligand>
</feature>
<feature type="binding site" evidence="1">
    <location>
        <position position="126"/>
    </location>
    <ligand>
        <name>substrate</name>
    </ligand>
</feature>
<feature type="binding site" evidence="1">
    <location>
        <position position="130"/>
    </location>
    <ligand>
        <name>substrate</name>
    </ligand>
</feature>
<feature type="binding site" evidence="1">
    <location>
        <begin position="139"/>
        <end position="140"/>
    </location>
    <ligand>
        <name>FMN</name>
        <dbReference type="ChEBI" id="CHEBI:58210"/>
    </ligand>
</feature>
<feature type="binding site" evidence="1">
    <location>
        <position position="183"/>
    </location>
    <ligand>
        <name>FMN</name>
        <dbReference type="ChEBI" id="CHEBI:58210"/>
    </ligand>
</feature>
<feature type="binding site" evidence="1">
    <location>
        <begin position="189"/>
        <end position="191"/>
    </location>
    <ligand>
        <name>substrate</name>
    </ligand>
</feature>
<feature type="binding site" evidence="1">
    <location>
        <position position="193"/>
    </location>
    <ligand>
        <name>FMN</name>
        <dbReference type="ChEBI" id="CHEBI:58210"/>
    </ligand>
</feature>
<sequence length="211" mass="24334">MSIADIRTDYTQAKLSELDTDPDPVAQFAKWFGEALRAEVPEPNAMSVSTVAANGRPSSRILLIKDFDQRGFTWFTNYESRKGQELAQNPHAALLFHWIPLEREVRIEGRVERVSSAESEQYFQSRPVKSRLSALASSQSHPVADRTALEAQYAKVEAQYGEHPPRPEHWGGYRLKPDYIEFWQGRASRLHDRIVYSLDKEGKWQRHRLQP</sequence>
<comment type="function">
    <text evidence="1">Catalyzes the oxidation of either pyridoxine 5'-phosphate (PNP) or pyridoxamine 5'-phosphate (PMP) into pyridoxal 5'-phosphate (PLP).</text>
</comment>
<comment type="catalytic activity">
    <reaction evidence="1">
        <text>pyridoxamine 5'-phosphate + O2 + H2O = pyridoxal 5'-phosphate + H2O2 + NH4(+)</text>
        <dbReference type="Rhea" id="RHEA:15817"/>
        <dbReference type="ChEBI" id="CHEBI:15377"/>
        <dbReference type="ChEBI" id="CHEBI:15379"/>
        <dbReference type="ChEBI" id="CHEBI:16240"/>
        <dbReference type="ChEBI" id="CHEBI:28938"/>
        <dbReference type="ChEBI" id="CHEBI:58451"/>
        <dbReference type="ChEBI" id="CHEBI:597326"/>
        <dbReference type="EC" id="1.4.3.5"/>
    </reaction>
</comment>
<comment type="catalytic activity">
    <reaction evidence="1">
        <text>pyridoxine 5'-phosphate + O2 = pyridoxal 5'-phosphate + H2O2</text>
        <dbReference type="Rhea" id="RHEA:15149"/>
        <dbReference type="ChEBI" id="CHEBI:15379"/>
        <dbReference type="ChEBI" id="CHEBI:16240"/>
        <dbReference type="ChEBI" id="CHEBI:58589"/>
        <dbReference type="ChEBI" id="CHEBI:597326"/>
        <dbReference type="EC" id="1.4.3.5"/>
    </reaction>
</comment>
<comment type="cofactor">
    <cofactor evidence="1">
        <name>FMN</name>
        <dbReference type="ChEBI" id="CHEBI:58210"/>
    </cofactor>
    <text evidence="1">Binds 1 FMN per subunit.</text>
</comment>
<comment type="pathway">
    <text evidence="1">Cofactor metabolism; pyridoxal 5'-phosphate salvage; pyridoxal 5'-phosphate from pyridoxamine 5'-phosphate: step 1/1.</text>
</comment>
<comment type="pathway">
    <text evidence="1">Cofactor metabolism; pyridoxal 5'-phosphate salvage; pyridoxal 5'-phosphate from pyridoxine 5'-phosphate: step 1/1.</text>
</comment>
<comment type="subunit">
    <text evidence="1">Homodimer.</text>
</comment>
<comment type="similarity">
    <text evidence="1">Belongs to the pyridoxamine 5'-phosphate oxidase family.</text>
</comment>
<name>PDXH_JANMA</name>
<dbReference type="EC" id="1.4.3.5" evidence="1"/>
<dbReference type="EMBL" id="CP000269">
    <property type="protein sequence ID" value="ABR88699.1"/>
    <property type="molecule type" value="Genomic_DNA"/>
</dbReference>
<dbReference type="RefSeq" id="WP_012080685.1">
    <property type="nucleotide sequence ID" value="NC_009659.1"/>
</dbReference>
<dbReference type="SMR" id="A6T1X9"/>
<dbReference type="STRING" id="375286.mma_2836"/>
<dbReference type="KEGG" id="mms:mma_2836"/>
<dbReference type="eggNOG" id="COG0259">
    <property type="taxonomic scope" value="Bacteria"/>
</dbReference>
<dbReference type="HOGENOM" id="CLU_032263_2_2_4"/>
<dbReference type="OrthoDB" id="9780392at2"/>
<dbReference type="UniPathway" id="UPA01068">
    <property type="reaction ID" value="UER00304"/>
</dbReference>
<dbReference type="UniPathway" id="UPA01068">
    <property type="reaction ID" value="UER00305"/>
</dbReference>
<dbReference type="Proteomes" id="UP000006388">
    <property type="component" value="Chromosome"/>
</dbReference>
<dbReference type="GO" id="GO:0010181">
    <property type="term" value="F:FMN binding"/>
    <property type="evidence" value="ECO:0007669"/>
    <property type="project" value="UniProtKB-UniRule"/>
</dbReference>
<dbReference type="GO" id="GO:0004733">
    <property type="term" value="F:pyridoxamine phosphate oxidase activity"/>
    <property type="evidence" value="ECO:0007669"/>
    <property type="project" value="UniProtKB-UniRule"/>
</dbReference>
<dbReference type="GO" id="GO:0008615">
    <property type="term" value="P:pyridoxine biosynthetic process"/>
    <property type="evidence" value="ECO:0007669"/>
    <property type="project" value="UniProtKB-KW"/>
</dbReference>
<dbReference type="FunFam" id="2.30.110.10:FF:000020">
    <property type="entry name" value="PNPO isoform 11"/>
    <property type="match status" value="1"/>
</dbReference>
<dbReference type="Gene3D" id="2.30.110.10">
    <property type="entry name" value="Electron Transport, Fmn-binding Protein, Chain A"/>
    <property type="match status" value="1"/>
</dbReference>
<dbReference type="HAMAP" id="MF_01629">
    <property type="entry name" value="PdxH"/>
    <property type="match status" value="1"/>
</dbReference>
<dbReference type="InterPro" id="IPR000659">
    <property type="entry name" value="Pyridox_Oxase"/>
</dbReference>
<dbReference type="InterPro" id="IPR019740">
    <property type="entry name" value="Pyridox_Oxase_CS"/>
</dbReference>
<dbReference type="InterPro" id="IPR011576">
    <property type="entry name" value="Pyridox_Oxase_N"/>
</dbReference>
<dbReference type="InterPro" id="IPR019576">
    <property type="entry name" value="Pyridoxamine_oxidase_dimer_C"/>
</dbReference>
<dbReference type="InterPro" id="IPR012349">
    <property type="entry name" value="Split_barrel_FMN-bd"/>
</dbReference>
<dbReference type="NCBIfam" id="TIGR00558">
    <property type="entry name" value="pdxH"/>
    <property type="match status" value="1"/>
</dbReference>
<dbReference type="NCBIfam" id="NF004231">
    <property type="entry name" value="PRK05679.1"/>
    <property type="match status" value="1"/>
</dbReference>
<dbReference type="PANTHER" id="PTHR10851:SF0">
    <property type="entry name" value="PYRIDOXINE-5'-PHOSPHATE OXIDASE"/>
    <property type="match status" value="1"/>
</dbReference>
<dbReference type="PANTHER" id="PTHR10851">
    <property type="entry name" value="PYRIDOXINE-5-PHOSPHATE OXIDASE"/>
    <property type="match status" value="1"/>
</dbReference>
<dbReference type="Pfam" id="PF10590">
    <property type="entry name" value="PNP_phzG_C"/>
    <property type="match status" value="1"/>
</dbReference>
<dbReference type="Pfam" id="PF01243">
    <property type="entry name" value="PNPOx_N"/>
    <property type="match status" value="1"/>
</dbReference>
<dbReference type="PIRSF" id="PIRSF000190">
    <property type="entry name" value="Pyd_amn-ph_oxd"/>
    <property type="match status" value="1"/>
</dbReference>
<dbReference type="SUPFAM" id="SSF50475">
    <property type="entry name" value="FMN-binding split barrel"/>
    <property type="match status" value="1"/>
</dbReference>
<dbReference type="PROSITE" id="PS01064">
    <property type="entry name" value="PYRIDOX_OXIDASE"/>
    <property type="match status" value="1"/>
</dbReference>
<keyword id="KW-0285">Flavoprotein</keyword>
<keyword id="KW-0288">FMN</keyword>
<keyword id="KW-0560">Oxidoreductase</keyword>
<keyword id="KW-0664">Pyridoxine biosynthesis</keyword>
<organism>
    <name type="scientific">Janthinobacterium sp. (strain Marseille)</name>
    <name type="common">Minibacterium massiliensis</name>
    <dbReference type="NCBI Taxonomy" id="375286"/>
    <lineage>
        <taxon>Bacteria</taxon>
        <taxon>Pseudomonadati</taxon>
        <taxon>Pseudomonadota</taxon>
        <taxon>Betaproteobacteria</taxon>
        <taxon>Burkholderiales</taxon>
        <taxon>Oxalobacteraceae</taxon>
        <taxon>Janthinobacterium</taxon>
    </lineage>
</organism>
<gene>
    <name evidence="1" type="primary">pdxH</name>
    <name type="ordered locus">mma_2836</name>
</gene>